<accession>Q90W79</accession>
<keyword id="KW-0130">Cell adhesion</keyword>
<keyword id="KW-1003">Cell membrane</keyword>
<keyword id="KW-1015">Disulfide bond</keyword>
<keyword id="KW-0325">Glycoprotein</keyword>
<keyword id="KW-0336">GPI-anchor</keyword>
<keyword id="KW-0393">Immunoglobulin domain</keyword>
<keyword id="KW-0449">Lipoprotein</keyword>
<keyword id="KW-0472">Membrane</keyword>
<keyword id="KW-1185">Reference proteome</keyword>
<keyword id="KW-0677">Repeat</keyword>
<keyword id="KW-0732">Signal</keyword>
<sequence length="1027" mass="113048">MMWLSWKLFLFLSLIGCLSESVDYGPVFVQEPDDVIFPTDSEEKKVSLNCQAHGSPTPTYRWLRNGTEIDVESDYRYSLIEGSLIISNPNEMKDSGQYQCLTTNMFGSILSREAVLQFAYLGNFSGRTRSAVSVREGQGVVLMCSPPLHSPEIIYSWVFNEFPSFVAEDSRRFISQETGNLYISKVQTSDVGSYICLVKNTVTNARVLSPPTPLTLRNDGVMGEYEPKIEVHFPYTVTAARGTTVKMECFALGNPVPTISWKKVNGHNPSKARLRKSQAVLEIPNVQLEDAGMYECKAENSRGRNVFRGQLQVYTYPQWVEKLNDTELDSGEQLRWECKATGKPRPTYRWLKNGVPLWPQSRIEMINSVLMIRTVNISDAGMYQCLAENKYGTIYASAELKILASAPTFPLNQMRKTIIITKGQEVVIECKPQASPKPTITWKKGDKALRESKRVTILPQGSLRILNASKSDEGRYSCRGVNVFGSAEIVASVSVKEPTRIELTPKKIELTVGESIVLSCKALHDSTLDVTFYWTLNGQPIDFDKEDGHFESIKAQASSADLMIRNILLMHAGRYGCRVQTAADAVSDETELLVRGPPGPPGVVIVEEITDTTATLSWSPGADNHSPISLYNLQARSPFSLGWQTVKTVPDVISGDMESAMAVELNPWVEYEFRVVATNKIGTGDPSAPSRMIRTNEAVPKTPPANVSGRSGRRHELVIAWEPVSEEFQNGEGFGYIVAFRPNGTRGWKEKMVTSSDASKFIYRDESVPPLTPFEVKVGVYNNKGDGPFSPIVVICSAEGEPTAAPIDVKATSLSVSEILVAWKHIKESLGRPQGFEIGYWKDMEQEEAAEKVKTAGNESSLLLTGLEGNTLYHLTVRAYNAAGYGPPSTAVRVATKKSPPSQAPSNVMWIQDGSHVSLGWEPVRPLANESEVMGYKVLLRQEGQSNSQVIETQKTSAVVILPDVGVYIIEVCAVSEGGDGTASPQIRVPSYAGGKVTSAQSTLHMFSTSSSSVTLLLVLMVPSTSW</sequence>
<organism>
    <name type="scientific">Gallus gallus</name>
    <name type="common">Chicken</name>
    <dbReference type="NCBI Taxonomy" id="9031"/>
    <lineage>
        <taxon>Eukaryota</taxon>
        <taxon>Metazoa</taxon>
        <taxon>Chordata</taxon>
        <taxon>Craniata</taxon>
        <taxon>Vertebrata</taxon>
        <taxon>Euteleostomi</taxon>
        <taxon>Archelosauria</taxon>
        <taxon>Archosauria</taxon>
        <taxon>Dinosauria</taxon>
        <taxon>Saurischia</taxon>
        <taxon>Theropoda</taxon>
        <taxon>Coelurosauria</taxon>
        <taxon>Aves</taxon>
        <taxon>Neognathae</taxon>
        <taxon>Galloanserae</taxon>
        <taxon>Galliformes</taxon>
        <taxon>Phasianidae</taxon>
        <taxon>Phasianinae</taxon>
        <taxon>Gallus</taxon>
    </lineage>
</organism>
<feature type="signal peptide" evidence="2">
    <location>
        <begin position="1"/>
        <end position="19"/>
    </location>
</feature>
<feature type="chain" id="PRO_0000014725" description="Contactin-5">
    <location>
        <begin position="20"/>
        <end position="999"/>
    </location>
</feature>
<feature type="propeptide" id="PRO_0000014726" description="Removed in mature form" evidence="2">
    <location>
        <begin position="1000"/>
        <end position="1027"/>
    </location>
</feature>
<feature type="domain" description="Ig-like C2-type 1">
    <location>
        <begin position="32"/>
        <end position="117"/>
    </location>
</feature>
<feature type="domain" description="Ig-like C2-type 2">
    <location>
        <begin position="123"/>
        <end position="209"/>
    </location>
</feature>
<feature type="domain" description="Ig-like C2-type 3">
    <location>
        <begin position="227"/>
        <end position="307"/>
    </location>
</feature>
<feature type="domain" description="Ig-like C2-type 4">
    <location>
        <begin position="317"/>
        <end position="401"/>
    </location>
</feature>
<feature type="domain" description="Ig-like C2-type 5">
    <location>
        <begin position="407"/>
        <end position="494"/>
    </location>
</feature>
<feature type="domain" description="Ig-like C2-type 6">
    <location>
        <begin position="498"/>
        <end position="593"/>
    </location>
</feature>
<feature type="domain" description="Fibronectin type-III 1" evidence="4">
    <location>
        <begin position="600"/>
        <end position="698"/>
    </location>
</feature>
<feature type="domain" description="Fibronectin type-III 2" evidence="4">
    <location>
        <begin position="703"/>
        <end position="800"/>
    </location>
</feature>
<feature type="domain" description="Fibronectin type-III 3" evidence="4">
    <location>
        <begin position="805"/>
        <end position="899"/>
    </location>
</feature>
<feature type="domain" description="Fibronectin type-III 4" evidence="4">
    <location>
        <begin position="901"/>
        <end position="994"/>
    </location>
</feature>
<feature type="lipid moiety-binding region" description="GPI-anchor amidated serine" evidence="2">
    <location>
        <position position="999"/>
    </location>
</feature>
<feature type="glycosylation site" description="N-linked (GlcNAc...) asparagine" evidence="2">
    <location>
        <position position="65"/>
    </location>
</feature>
<feature type="glycosylation site" description="N-linked (GlcNAc...) asparagine" evidence="2">
    <location>
        <position position="123"/>
    </location>
</feature>
<feature type="glycosylation site" description="N-linked (GlcNAc...) asparagine" evidence="2">
    <location>
        <position position="324"/>
    </location>
</feature>
<feature type="glycosylation site" description="N-linked (GlcNAc...) asparagine" evidence="2">
    <location>
        <position position="376"/>
    </location>
</feature>
<feature type="glycosylation site" description="N-linked (GlcNAc...) asparagine" evidence="2">
    <location>
        <position position="467"/>
    </location>
</feature>
<feature type="glycosylation site" description="N-linked (GlcNAc...) asparagine" evidence="2">
    <location>
        <position position="706"/>
    </location>
</feature>
<feature type="glycosylation site" description="N-linked (GlcNAc...) asparagine" evidence="2">
    <location>
        <position position="743"/>
    </location>
</feature>
<feature type="glycosylation site" description="N-linked (GlcNAc...) asparagine" evidence="2">
    <location>
        <position position="858"/>
    </location>
</feature>
<feature type="glycosylation site" description="N-linked (GlcNAc...) asparagine" evidence="2">
    <location>
        <position position="929"/>
    </location>
</feature>
<feature type="disulfide bond" evidence="3">
    <location>
        <begin position="50"/>
        <end position="100"/>
    </location>
</feature>
<feature type="disulfide bond" evidence="3">
    <location>
        <begin position="144"/>
        <end position="196"/>
    </location>
</feature>
<feature type="disulfide bond" evidence="3">
    <location>
        <begin position="249"/>
        <end position="296"/>
    </location>
</feature>
<feature type="disulfide bond" evidence="3">
    <location>
        <begin position="338"/>
        <end position="385"/>
    </location>
</feature>
<feature type="disulfide bond" evidence="3">
    <location>
        <begin position="430"/>
        <end position="478"/>
    </location>
</feature>
<feature type="disulfide bond" evidence="3">
    <location>
        <begin position="520"/>
        <end position="577"/>
    </location>
</feature>
<evidence type="ECO:0000250" key="1"/>
<evidence type="ECO:0000255" key="2"/>
<evidence type="ECO:0000255" key="3">
    <source>
        <dbReference type="PROSITE-ProRule" id="PRU00114"/>
    </source>
</evidence>
<evidence type="ECO:0000255" key="4">
    <source>
        <dbReference type="PROSITE-ProRule" id="PRU00316"/>
    </source>
</evidence>
<evidence type="ECO:0000269" key="5">
    <source>
    </source>
</evidence>
<evidence type="ECO:0000305" key="6"/>
<protein>
    <recommendedName>
        <fullName>Contactin-5</fullName>
    </recommendedName>
    <alternativeName>
        <fullName>F11 axonin-1-related protein 2</fullName>
        <shortName>FAR-2</shortName>
    </alternativeName>
</protein>
<proteinExistence type="evidence at protein level"/>
<gene>
    <name type="primary">CNTN5</name>
    <name type="synonym">FAR2</name>
</gene>
<comment type="function">
    <text evidence="5">Contactins mediate cell surface interactions during nervous system development. May contribute to the formation of somatotopic maps of cerebellar afferents during the development of the nervous system.</text>
</comment>
<comment type="subunit">
    <text evidence="5">Interacts with INgCAM/L1 and the tenascin-R TNP protein. Does not interacts with NrCAM.</text>
</comment>
<comment type="subcellular location">
    <subcellularLocation>
        <location evidence="1">Cell membrane</location>
        <topology evidence="1">Lipid-anchor</topology>
        <topology evidence="1">GPI-anchor</topology>
    </subcellularLocation>
</comment>
<comment type="tissue specificity">
    <text evidence="5">Expressed by subpopulations of Purkinje cells in the cerebellum. Also expressed by one type of Purkinje cell afferents, the climbing fibers.</text>
</comment>
<comment type="similarity">
    <text evidence="6">Belongs to the immunoglobulin superfamily. Contactin family.</text>
</comment>
<reference key="1">
    <citation type="journal article" date="2001" name="Mol. Cell. Neurosci.">
        <title>The contactin-related protein FAR-2 defines Purkinje cell clusters and labels subpopulations of climbing fibers in the developing cerebellum.</title>
        <authorList>
            <person name="Plagge A."/>
            <person name="Sendtner-Voelderndorff L."/>
            <person name="Sirim P."/>
            <person name="Freigang J."/>
            <person name="Rader C."/>
            <person name="Sonderegger P."/>
            <person name="Bruemmendorf T."/>
        </authorList>
    </citation>
    <scope>NUCLEOTIDE SEQUENCE [MRNA]</scope>
    <scope>FUNCTION</scope>
    <scope>TISSUE SPECIFICITY</scope>
    <scope>INTERACTION WITH NGCAM/L1 AND TNP</scope>
    <source>
        <tissue>Brain</tissue>
    </source>
</reference>
<name>CNTN5_CHICK</name>
<dbReference type="EMBL" id="AJ309935">
    <property type="protein sequence ID" value="CAC51431.1"/>
    <property type="molecule type" value="mRNA"/>
</dbReference>
<dbReference type="RefSeq" id="NP_989943.1">
    <property type="nucleotide sequence ID" value="NM_204612.1"/>
</dbReference>
<dbReference type="RefSeq" id="XP_015135375.1">
    <property type="nucleotide sequence ID" value="XM_015279889.1"/>
</dbReference>
<dbReference type="RefSeq" id="XP_040563050.1">
    <property type="nucleotide sequence ID" value="XM_040707116.2"/>
</dbReference>
<dbReference type="RefSeq" id="XP_046757836.1">
    <property type="nucleotide sequence ID" value="XM_046901880.1"/>
</dbReference>
<dbReference type="SMR" id="Q90W79"/>
<dbReference type="FunCoup" id="Q90W79">
    <property type="interactions" value="68"/>
</dbReference>
<dbReference type="STRING" id="9031.ENSGALP00000027744"/>
<dbReference type="GlyCosmos" id="Q90W79">
    <property type="glycosylation" value="9 sites, No reported glycans"/>
</dbReference>
<dbReference type="GlyGen" id="Q90W79">
    <property type="glycosylation" value="10 sites"/>
</dbReference>
<dbReference type="PaxDb" id="9031-ENSGALP00000027744"/>
<dbReference type="Ensembl" id="ENSGALT00010019725.1">
    <property type="protein sequence ID" value="ENSGALP00010011273.1"/>
    <property type="gene ID" value="ENSGALG00010008242.1"/>
</dbReference>
<dbReference type="GeneID" id="395317"/>
<dbReference type="KEGG" id="gga:395317"/>
<dbReference type="CTD" id="53942"/>
<dbReference type="VEuPathDB" id="HostDB:geneid_395317"/>
<dbReference type="eggNOG" id="KOG3513">
    <property type="taxonomic scope" value="Eukaryota"/>
</dbReference>
<dbReference type="GeneTree" id="ENSGT00940000158183"/>
<dbReference type="InParanoid" id="Q90W79"/>
<dbReference type="OrthoDB" id="5982258at2759"/>
<dbReference type="PhylomeDB" id="Q90W79"/>
<dbReference type="Reactome" id="R-GGA-163125">
    <property type="pathway name" value="Post-translational modification: synthesis of GPI-anchored proteins"/>
</dbReference>
<dbReference type="PRO" id="PR:Q90W79"/>
<dbReference type="Proteomes" id="UP000000539">
    <property type="component" value="Chromosome 1"/>
</dbReference>
<dbReference type="Bgee" id="ENSGALG00000017197">
    <property type="expression patterns" value="Expressed in brain and 2 other cell types or tissues"/>
</dbReference>
<dbReference type="GO" id="GO:0043005">
    <property type="term" value="C:neuron projection"/>
    <property type="evidence" value="ECO:0000318"/>
    <property type="project" value="GO_Central"/>
</dbReference>
<dbReference type="GO" id="GO:0005886">
    <property type="term" value="C:plasma membrane"/>
    <property type="evidence" value="ECO:0007669"/>
    <property type="project" value="UniProtKB-SubCell"/>
</dbReference>
<dbReference type="GO" id="GO:0098552">
    <property type="term" value="C:side of membrane"/>
    <property type="evidence" value="ECO:0007669"/>
    <property type="project" value="UniProtKB-KW"/>
</dbReference>
<dbReference type="GO" id="GO:0007155">
    <property type="term" value="P:cell adhesion"/>
    <property type="evidence" value="ECO:0007669"/>
    <property type="project" value="UniProtKB-KW"/>
</dbReference>
<dbReference type="CDD" id="cd00063">
    <property type="entry name" value="FN3"/>
    <property type="match status" value="4"/>
</dbReference>
<dbReference type="CDD" id="cd05848">
    <property type="entry name" value="IgI_1_Contactin-5"/>
    <property type="match status" value="1"/>
</dbReference>
<dbReference type="FunFam" id="2.60.40.10:FF:000035">
    <property type="entry name" value="Contactin 1"/>
    <property type="match status" value="1"/>
</dbReference>
<dbReference type="FunFam" id="2.60.40.10:FF:000044">
    <property type="entry name" value="Contactin 1"/>
    <property type="match status" value="1"/>
</dbReference>
<dbReference type="FunFam" id="2.60.40.10:FF:000047">
    <property type="entry name" value="Contactin 1"/>
    <property type="match status" value="1"/>
</dbReference>
<dbReference type="FunFam" id="2.60.40.10:FF:000052">
    <property type="entry name" value="Contactin 1"/>
    <property type="match status" value="1"/>
</dbReference>
<dbReference type="FunFam" id="2.60.40.10:FF:000054">
    <property type="entry name" value="Contactin 1"/>
    <property type="match status" value="1"/>
</dbReference>
<dbReference type="FunFam" id="2.60.40.10:FF:000064">
    <property type="entry name" value="Contactin 1"/>
    <property type="match status" value="1"/>
</dbReference>
<dbReference type="FunFam" id="2.60.40.10:FF:000004">
    <property type="entry name" value="DCC isoform 1"/>
    <property type="match status" value="2"/>
</dbReference>
<dbReference type="FunFam" id="2.60.40.10:FF:000005">
    <property type="entry name" value="Neuronal cell adhesion molecule"/>
    <property type="match status" value="1"/>
</dbReference>
<dbReference type="FunFam" id="2.60.40.10:FF:000028">
    <property type="entry name" value="Neuronal cell adhesion molecule"/>
    <property type="match status" value="1"/>
</dbReference>
<dbReference type="Gene3D" id="2.60.40.10">
    <property type="entry name" value="Immunoglobulins"/>
    <property type="match status" value="10"/>
</dbReference>
<dbReference type="InterPro" id="IPR003961">
    <property type="entry name" value="FN3_dom"/>
</dbReference>
<dbReference type="InterPro" id="IPR036116">
    <property type="entry name" value="FN3_sf"/>
</dbReference>
<dbReference type="InterPro" id="IPR007110">
    <property type="entry name" value="Ig-like_dom"/>
</dbReference>
<dbReference type="InterPro" id="IPR036179">
    <property type="entry name" value="Ig-like_dom_sf"/>
</dbReference>
<dbReference type="InterPro" id="IPR013783">
    <property type="entry name" value="Ig-like_fold"/>
</dbReference>
<dbReference type="InterPro" id="IPR013098">
    <property type="entry name" value="Ig_I-set"/>
</dbReference>
<dbReference type="InterPro" id="IPR003599">
    <property type="entry name" value="Ig_sub"/>
</dbReference>
<dbReference type="InterPro" id="IPR003598">
    <property type="entry name" value="Ig_sub2"/>
</dbReference>
<dbReference type="PANTHER" id="PTHR44170:SF17">
    <property type="entry name" value="CONTACTIN-5"/>
    <property type="match status" value="1"/>
</dbReference>
<dbReference type="PANTHER" id="PTHR44170">
    <property type="entry name" value="PROTEIN SIDEKICK"/>
    <property type="match status" value="1"/>
</dbReference>
<dbReference type="Pfam" id="PF00041">
    <property type="entry name" value="fn3"/>
    <property type="match status" value="2"/>
</dbReference>
<dbReference type="Pfam" id="PF07679">
    <property type="entry name" value="I-set"/>
    <property type="match status" value="3"/>
</dbReference>
<dbReference type="Pfam" id="PF13927">
    <property type="entry name" value="Ig_3"/>
    <property type="match status" value="3"/>
</dbReference>
<dbReference type="SMART" id="SM00060">
    <property type="entry name" value="FN3"/>
    <property type="match status" value="4"/>
</dbReference>
<dbReference type="SMART" id="SM00409">
    <property type="entry name" value="IG"/>
    <property type="match status" value="6"/>
</dbReference>
<dbReference type="SMART" id="SM00408">
    <property type="entry name" value="IGc2"/>
    <property type="match status" value="6"/>
</dbReference>
<dbReference type="SUPFAM" id="SSF49265">
    <property type="entry name" value="Fibronectin type III"/>
    <property type="match status" value="2"/>
</dbReference>
<dbReference type="SUPFAM" id="SSF48726">
    <property type="entry name" value="Immunoglobulin"/>
    <property type="match status" value="6"/>
</dbReference>
<dbReference type="PROSITE" id="PS50853">
    <property type="entry name" value="FN3"/>
    <property type="match status" value="4"/>
</dbReference>
<dbReference type="PROSITE" id="PS50835">
    <property type="entry name" value="IG_LIKE"/>
    <property type="match status" value="6"/>
</dbReference>